<proteinExistence type="evidence at protein level"/>
<keyword id="KW-0349">Heme</keyword>
<keyword id="KW-0408">Iron</keyword>
<keyword id="KW-0472">Membrane</keyword>
<keyword id="KW-0479">Metal-binding</keyword>
<keyword id="KW-0503">Monooxygenase</keyword>
<keyword id="KW-0560">Oxidoreductase</keyword>
<keyword id="KW-0812">Transmembrane</keyword>
<keyword id="KW-1133">Transmembrane helix</keyword>
<dbReference type="EC" id="1.-.-.-" evidence="7"/>
<dbReference type="EMBL" id="DS499596">
    <property type="protein sequence ID" value="EDP52282.1"/>
    <property type="molecule type" value="Genomic_DNA"/>
</dbReference>
<dbReference type="SMR" id="B0XZV0"/>
<dbReference type="EnsemblFungi" id="EDP52282">
    <property type="protein sequence ID" value="EDP52282"/>
    <property type="gene ID" value="AFUB_034460"/>
</dbReference>
<dbReference type="VEuPathDB" id="FungiDB:AFUB_034460"/>
<dbReference type="HOGENOM" id="CLU_001570_5_11_1"/>
<dbReference type="OrthoDB" id="37381at5052"/>
<dbReference type="PhylomeDB" id="B0XZV0"/>
<dbReference type="Proteomes" id="UP000001699">
    <property type="component" value="Unassembled WGS sequence"/>
</dbReference>
<dbReference type="GO" id="GO:0016020">
    <property type="term" value="C:membrane"/>
    <property type="evidence" value="ECO:0007669"/>
    <property type="project" value="UniProtKB-SubCell"/>
</dbReference>
<dbReference type="GO" id="GO:0020037">
    <property type="term" value="F:heme binding"/>
    <property type="evidence" value="ECO:0007669"/>
    <property type="project" value="InterPro"/>
</dbReference>
<dbReference type="GO" id="GO:0005506">
    <property type="term" value="F:iron ion binding"/>
    <property type="evidence" value="ECO:0007669"/>
    <property type="project" value="InterPro"/>
</dbReference>
<dbReference type="GO" id="GO:0004497">
    <property type="term" value="F:monooxygenase activity"/>
    <property type="evidence" value="ECO:0007669"/>
    <property type="project" value="UniProtKB-KW"/>
</dbReference>
<dbReference type="GO" id="GO:0016705">
    <property type="term" value="F:oxidoreductase activity, acting on paired donors, with incorporation or reduction of molecular oxygen"/>
    <property type="evidence" value="ECO:0007669"/>
    <property type="project" value="InterPro"/>
</dbReference>
<dbReference type="GO" id="GO:0044283">
    <property type="term" value="P:small molecule biosynthetic process"/>
    <property type="evidence" value="ECO:0007669"/>
    <property type="project" value="UniProtKB-ARBA"/>
</dbReference>
<dbReference type="CDD" id="cd11069">
    <property type="entry name" value="CYP_FUM15-like"/>
    <property type="match status" value="1"/>
</dbReference>
<dbReference type="FunFam" id="1.10.630.10:FF:000051">
    <property type="entry name" value="Cytochrome P450 monooxygenase (Fum15)"/>
    <property type="match status" value="1"/>
</dbReference>
<dbReference type="Gene3D" id="1.10.630.10">
    <property type="entry name" value="Cytochrome P450"/>
    <property type="match status" value="1"/>
</dbReference>
<dbReference type="InterPro" id="IPR001128">
    <property type="entry name" value="Cyt_P450"/>
</dbReference>
<dbReference type="InterPro" id="IPR002401">
    <property type="entry name" value="Cyt_P450_E_grp-I"/>
</dbReference>
<dbReference type="InterPro" id="IPR036396">
    <property type="entry name" value="Cyt_P450_sf"/>
</dbReference>
<dbReference type="InterPro" id="IPR050121">
    <property type="entry name" value="Cytochrome_P450_monoxygenase"/>
</dbReference>
<dbReference type="PANTHER" id="PTHR24305">
    <property type="entry name" value="CYTOCHROME P450"/>
    <property type="match status" value="1"/>
</dbReference>
<dbReference type="PANTHER" id="PTHR24305:SF227">
    <property type="entry name" value="P450, PUTATIVE (EUROFUNG)-RELATED"/>
    <property type="match status" value="1"/>
</dbReference>
<dbReference type="Pfam" id="PF00067">
    <property type="entry name" value="p450"/>
    <property type="match status" value="1"/>
</dbReference>
<dbReference type="PRINTS" id="PR00463">
    <property type="entry name" value="EP450I"/>
</dbReference>
<dbReference type="PRINTS" id="PR00385">
    <property type="entry name" value="P450"/>
</dbReference>
<dbReference type="SUPFAM" id="SSF48264">
    <property type="entry name" value="Cytochrome P450"/>
    <property type="match status" value="1"/>
</dbReference>
<reference key="1">
    <citation type="journal article" date="2008" name="PLoS Genet.">
        <title>Genomic islands in the pathogenic filamentous fungus Aspergillus fumigatus.</title>
        <authorList>
            <person name="Fedorova N.D."/>
            <person name="Khaldi N."/>
            <person name="Joardar V.S."/>
            <person name="Maiti R."/>
            <person name="Amedeo P."/>
            <person name="Anderson M.J."/>
            <person name="Crabtree J."/>
            <person name="Silva J.C."/>
            <person name="Badger J.H."/>
            <person name="Albarraq A."/>
            <person name="Angiuoli S."/>
            <person name="Bussey H."/>
            <person name="Bowyer P."/>
            <person name="Cotty P.J."/>
            <person name="Dyer P.S."/>
            <person name="Egan A."/>
            <person name="Galens K."/>
            <person name="Fraser-Liggett C.M."/>
            <person name="Haas B.J."/>
            <person name="Inman J.M."/>
            <person name="Kent R."/>
            <person name="Lemieux S."/>
            <person name="Malavazi I."/>
            <person name="Orvis J."/>
            <person name="Roemer T."/>
            <person name="Ronning C.M."/>
            <person name="Sundaram J.P."/>
            <person name="Sutton G."/>
            <person name="Turner G."/>
            <person name="Venter J.C."/>
            <person name="White O.R."/>
            <person name="Whitty B.R."/>
            <person name="Youngman P."/>
            <person name="Wolfe K.H."/>
            <person name="Goldman G.H."/>
            <person name="Wortman J.R."/>
            <person name="Jiang B."/>
            <person name="Denning D.W."/>
            <person name="Nierman W.C."/>
        </authorList>
    </citation>
    <scope>NUCLEOTIDE SEQUENCE [LARGE SCALE GENOMIC DNA]</scope>
    <source>
        <strain>CBS 144.89 / FGSC A1163 / CEA10</strain>
    </source>
</reference>
<reference key="2">
    <citation type="journal article" date="1992" name="J. Antibiot.">
        <title>Sphingofungins A, B, C, and D; a new family of antifungal agents. I. Fermentation, isolation, and biological activity.</title>
        <authorList>
            <person name="VanMiddlesworth F."/>
            <person name="Giacobbe R.A."/>
            <person name="Lopez M."/>
            <person name="Garrity G."/>
            <person name="Bland J.A."/>
            <person name="Bartizal K."/>
            <person name="Fromtling R.A."/>
            <person name="Polishook J."/>
            <person name="Zweerink M."/>
            <person name="Edison A.M."/>
        </authorList>
    </citation>
    <scope>BIOTECHNOLOGY</scope>
</reference>
<reference key="3">
    <citation type="journal article" date="2022" name="ACS Chem. Biol.">
        <title>Biosynthesis of the sphingolipid inhibitors sphingofungins in filamentous fungi requires aminomalonate as a metabolic precursor.</title>
        <authorList>
            <person name="Bissell A.U."/>
            <person name="Rautschek J."/>
            <person name="Hoefgen S."/>
            <person name="Raguz L."/>
            <person name="Mattern D.J."/>
            <person name="Saeed N."/>
            <person name="Janevska S."/>
            <person name="Jojic K."/>
            <person name="Huang Y."/>
            <person name="Kufs J.E."/>
            <person name="Herboeck B."/>
            <person name="Guo H."/>
            <person name="Hillmann F."/>
            <person name="Beemelmanns C."/>
            <person name="Valiante V."/>
        </authorList>
    </citation>
    <scope>FUNCTION</scope>
    <scope>INDUCTION</scope>
    <scope>DISRUPTION PHENOTYPE</scope>
    <scope>CATALYTIC ACTIVITY</scope>
    <scope>PATHWAY</scope>
</reference>
<gene>
    <name evidence="5" type="primary">sphH</name>
    <name type="ORF">AFUB_034460</name>
</gene>
<feature type="chain" id="PRO_0000461291" description="Cytochrome P450 monooxygenase sphH">
    <location>
        <begin position="1"/>
        <end position="543"/>
    </location>
</feature>
<feature type="transmembrane region" description="Helical" evidence="2">
    <location>
        <begin position="1"/>
        <end position="21"/>
    </location>
</feature>
<feature type="transmembrane region" description="Helical" evidence="2">
    <location>
        <begin position="32"/>
        <end position="52"/>
    </location>
</feature>
<feature type="binding site" description="axial binding residue" evidence="1">
    <location>
        <position position="487"/>
    </location>
    <ligand>
        <name>heme</name>
        <dbReference type="ChEBI" id="CHEBI:30413"/>
    </ligand>
    <ligandPart>
        <name>Fe</name>
        <dbReference type="ChEBI" id="CHEBI:18248"/>
    </ligandPart>
</feature>
<accession>B0XZV0</accession>
<name>SPHH_ASPFC</name>
<comment type="function">
    <text evidence="4">Cytochrome P450 monooxygenase; part of the gene cluster that mediates the biosynthesis of sphingofungins, bioactive molecules acting as sphingolipid inhibitors via inhibiting serine palmitoyl transferase (SPT) (PubMed:35023724). Within the pathway, sphH catalyzes the conversion of presphingofungin into sphingofungin B1 via hydroxylagtion at position C-14 (PubMed:35023724). Sphingofungin biosynthesis starts with the PKS sphB that produces an C18 polyketide precursor 3-hydroxyoctadeca-4,10-dienoyl-ACP containing one delta-6 desaturation and one delta-12 desaturation. The aminoacyl transferase sphA uses the sphB product to produce 3-keto-presphingofungin by adding an aminomalonate molecule. SphF then reduces the C-3 ketone of 3-keto-presphingofungin which leads to presphingofungin. The cytochrome P450 monooxygenase sphH converts presphingofungin into sphingofungin B1 which is further converted to sphingofungin B by the dioxygenase sphC. SphC is also able to convert presphingofungin into sphingofungin B2. The acetyltransferase sphE acetylates sphingofungin B to produce sphingofungin C, but can also convert sphingofungin B1 into sphingofungin C1 and sphingofungin B2 into sphingofungin C2. Finally, sphingofungin C can be spontaneously converted into sphingofungin D (PubMed:35023724).</text>
</comment>
<comment type="catalytic activity">
    <reaction evidence="4">
        <text>presphingofungin + 2 reduced [NADPH--hemoprotein reductase] + O2 = sphingofungin B1 + 2 oxidized [NADPH--hemoprotein reductase] + H2O + 2 H(+)</text>
        <dbReference type="Rhea" id="RHEA:81163"/>
        <dbReference type="Rhea" id="RHEA-COMP:11964"/>
        <dbReference type="Rhea" id="RHEA-COMP:11965"/>
        <dbReference type="ChEBI" id="CHEBI:15377"/>
        <dbReference type="ChEBI" id="CHEBI:15378"/>
        <dbReference type="ChEBI" id="CHEBI:15379"/>
        <dbReference type="ChEBI" id="CHEBI:57618"/>
        <dbReference type="ChEBI" id="CHEBI:58210"/>
        <dbReference type="ChEBI" id="CHEBI:231805"/>
        <dbReference type="ChEBI" id="CHEBI:231806"/>
    </reaction>
    <physiologicalReaction direction="left-to-right" evidence="4">
        <dbReference type="Rhea" id="RHEA:81164"/>
    </physiologicalReaction>
</comment>
<comment type="cofactor">
    <cofactor evidence="1">
        <name>heme</name>
        <dbReference type="ChEBI" id="CHEBI:30413"/>
    </cofactor>
</comment>
<comment type="pathway">
    <text evidence="4">Secondary metabolite biosynthesis.</text>
</comment>
<comment type="subcellular location">
    <subcellularLocation>
        <location evidence="2">Membrane</location>
        <topology evidence="2">Multi-pass membrane protein</topology>
    </subcellularLocation>
</comment>
<comment type="induction">
    <text evidence="4">Expression is positively regulated by the sphingofungins biosynthesis cluster-specific transcription factor sphG.</text>
</comment>
<comment type="disruption phenotype">
    <text evidence="4">Leads to the accumulation of sphingofungins B2 and C2, noth lacking the C-14 hydroxyl group.</text>
</comment>
<comment type="biotechnology">
    <text evidence="3">The sphingofungins A, B, C, and D, show a limited antifungal spectrum of activity but are especially effective against Cryptococcus species, fungal pathogens causing opportunistic infections in human.</text>
</comment>
<comment type="similarity">
    <text evidence="6">Belongs to the cytochrome P450 family.</text>
</comment>
<sequence>MGPIHNYFGVVCLGIAASVYFRPECALYGSRIATFAVLLTGIAISKLLYQLFIYPQFVTPLKHFPAPPNRHWLTGNTGSLLVDTPHALMKEWAKTIPNDGILRYYIVGNMERLTVTSPAVLREILVSKAYEFAKPLVIQQTLRRVLGNGILIAEGEEHKFQRKNLKPAFAYRHVKDLYSVFWSKGTEMTKLIRKDLQSRKAPDDNTIQVRTWASRSSLDIIGLAGMGRDFGSLQDPENSLSQSYEMIFATPGLGTKILFILGMLLGNTTWLAKLPTKQNRLIDTGCRNIRDATRRMIREQKAKMEDPNAAAEVDIISVAMRSGNFDDDNLIDQLMTFLGAGHETTAGALQWAIYALCKHPDVQSRLREEVRANLPPIHGENPGPIDAATIDSLPYLNAVCNEVIRFHPSVPNTVRVALNDTTLMGHPIPKGTQVVISPELVNHMPALWGPDAERFNPDRWMGPGKANTGGAASNYAFLSFLHGPRSCIGQVFAKAELACLLAAVVGSFAFELKSPDAPLEVREGATIAPKDGVLAKFTPVEGW</sequence>
<protein>
    <recommendedName>
        <fullName evidence="5">Cytochrome P450 monooxygenase sphH</fullName>
        <ecNumber evidence="7">1.-.-.-</ecNumber>
    </recommendedName>
    <alternativeName>
        <fullName evidence="5">Sphingofungin biosynthesis cluster protein H</fullName>
    </alternativeName>
</protein>
<organism>
    <name type="scientific">Aspergillus fumigatus (strain CBS 144.89 / FGSC A1163 / CEA10)</name>
    <name type="common">Neosartorya fumigata</name>
    <dbReference type="NCBI Taxonomy" id="451804"/>
    <lineage>
        <taxon>Eukaryota</taxon>
        <taxon>Fungi</taxon>
        <taxon>Dikarya</taxon>
        <taxon>Ascomycota</taxon>
        <taxon>Pezizomycotina</taxon>
        <taxon>Eurotiomycetes</taxon>
        <taxon>Eurotiomycetidae</taxon>
        <taxon>Eurotiales</taxon>
        <taxon>Aspergillaceae</taxon>
        <taxon>Aspergillus</taxon>
        <taxon>Aspergillus subgen. Fumigati</taxon>
    </lineage>
</organism>
<evidence type="ECO:0000250" key="1">
    <source>
        <dbReference type="UniProtKB" id="P04798"/>
    </source>
</evidence>
<evidence type="ECO:0000255" key="2"/>
<evidence type="ECO:0000269" key="3">
    <source>
    </source>
</evidence>
<evidence type="ECO:0000269" key="4">
    <source>
    </source>
</evidence>
<evidence type="ECO:0000303" key="5">
    <source>
    </source>
</evidence>
<evidence type="ECO:0000305" key="6"/>
<evidence type="ECO:0000305" key="7">
    <source>
    </source>
</evidence>